<comment type="function">
    <text evidence="1">The RuvA-RuvB-RuvC complex processes Holliday junction (HJ) DNA during genetic recombination and DNA repair, while the RuvA-RuvB complex plays an important role in the rescue of blocked DNA replication forks via replication fork reversal (RFR). RuvA specifically binds to HJ cruciform DNA, conferring on it an open structure. The RuvB hexamer acts as an ATP-dependent pump, pulling dsDNA into and through the RuvAB complex. HJ branch migration allows RuvC to scan DNA until it finds its consensus sequence, where it cleaves and resolves the cruciform DNA.</text>
</comment>
<comment type="subunit">
    <text evidence="1">Homotetramer. Forms an RuvA(8)-RuvB(12)-Holliday junction (HJ) complex. HJ DNA is sandwiched between 2 RuvA tetramers; dsDNA enters through RuvA and exits via RuvB. An RuvB hexamer assembles on each DNA strand where it exits the tetramer. Each RuvB hexamer is contacted by two RuvA subunits (via domain III) on 2 adjacent RuvB subunits; this complex drives branch migration. In the full resolvosome a probable DNA-RuvA(4)-RuvB(12)-RuvC(2) complex forms which resolves the HJ.</text>
</comment>
<comment type="subcellular location">
    <subcellularLocation>
        <location evidence="1">Cytoplasm</location>
    </subcellularLocation>
</comment>
<comment type="domain">
    <text evidence="1">Has three domains with a flexible linker between the domains II and III and assumes an 'L' shape. Domain III is highly mobile and contacts RuvB.</text>
</comment>
<comment type="similarity">
    <text evidence="1">Belongs to the RuvA family.</text>
</comment>
<gene>
    <name evidence="1" type="primary">ruvA</name>
    <name type="ordered locus">NGR_c27920</name>
</gene>
<protein>
    <recommendedName>
        <fullName evidence="1">Holliday junction branch migration complex subunit RuvA</fullName>
    </recommendedName>
</protein>
<accession>C3MIH6</accession>
<proteinExistence type="inferred from homology"/>
<feature type="chain" id="PRO_1000195171" description="Holliday junction branch migration complex subunit RuvA">
    <location>
        <begin position="1"/>
        <end position="205"/>
    </location>
</feature>
<feature type="region of interest" description="Domain I" evidence="1">
    <location>
        <begin position="1"/>
        <end position="64"/>
    </location>
</feature>
<feature type="region of interest" description="Domain II" evidence="1">
    <location>
        <begin position="65"/>
        <end position="143"/>
    </location>
</feature>
<feature type="region of interest" description="Flexible linker" evidence="1">
    <location>
        <begin position="144"/>
        <end position="153"/>
    </location>
</feature>
<feature type="region of interest" description="Domain III" evidence="1">
    <location>
        <begin position="153"/>
        <end position="205"/>
    </location>
</feature>
<name>RUVA_SINFN</name>
<sequence>MIGKLKGTIDEIGEDFVVLDVHGVGYVAYCSARTLAKLGSAGEAAVLFIETYVREDQLRLFGFLSALEREWFRLLQTVQGVGSKVALALLTTLTPGELANAIALQDKTSVARAPGVGPKVAVRIVTELKNKAPAFAGEMSASIGLKQELGEGVAAAPVSDAVSALTNLGYSRDQAANAVAAALKNGGEGGDSAKLIRLGLKELAR</sequence>
<evidence type="ECO:0000255" key="1">
    <source>
        <dbReference type="HAMAP-Rule" id="MF_00031"/>
    </source>
</evidence>
<reference key="1">
    <citation type="journal article" date="2009" name="Appl. Environ. Microbiol.">
        <title>Rhizobium sp. strain NGR234 possesses a remarkable number of secretion systems.</title>
        <authorList>
            <person name="Schmeisser C."/>
            <person name="Liesegang H."/>
            <person name="Krysciak D."/>
            <person name="Bakkou N."/>
            <person name="Le Quere A."/>
            <person name="Wollherr A."/>
            <person name="Heinemeyer I."/>
            <person name="Morgenstern B."/>
            <person name="Pommerening-Roeser A."/>
            <person name="Flores M."/>
            <person name="Palacios R."/>
            <person name="Brenner S."/>
            <person name="Gottschalk G."/>
            <person name="Schmitz R.A."/>
            <person name="Broughton W.J."/>
            <person name="Perret X."/>
            <person name="Strittmatter A.W."/>
            <person name="Streit W.R."/>
        </authorList>
    </citation>
    <scope>NUCLEOTIDE SEQUENCE [LARGE SCALE GENOMIC DNA]</scope>
    <source>
        <strain>NBRC 101917 / NGR234</strain>
    </source>
</reference>
<organism>
    <name type="scientific">Sinorhizobium fredii (strain NBRC 101917 / NGR234)</name>
    <dbReference type="NCBI Taxonomy" id="394"/>
    <lineage>
        <taxon>Bacteria</taxon>
        <taxon>Pseudomonadati</taxon>
        <taxon>Pseudomonadota</taxon>
        <taxon>Alphaproteobacteria</taxon>
        <taxon>Hyphomicrobiales</taxon>
        <taxon>Rhizobiaceae</taxon>
        <taxon>Sinorhizobium/Ensifer group</taxon>
        <taxon>Sinorhizobium</taxon>
    </lineage>
</organism>
<dbReference type="EMBL" id="CP001389">
    <property type="protein sequence ID" value="ACP26539.1"/>
    <property type="molecule type" value="Genomic_DNA"/>
</dbReference>
<dbReference type="RefSeq" id="WP_012709295.1">
    <property type="nucleotide sequence ID" value="NC_012587.1"/>
</dbReference>
<dbReference type="RefSeq" id="YP_002827292.1">
    <property type="nucleotide sequence ID" value="NC_012587.1"/>
</dbReference>
<dbReference type="SMR" id="C3MIH6"/>
<dbReference type="STRING" id="394.NGR_c27920"/>
<dbReference type="KEGG" id="rhi:NGR_c27920"/>
<dbReference type="PATRIC" id="fig|394.7.peg.5627"/>
<dbReference type="eggNOG" id="COG0632">
    <property type="taxonomic scope" value="Bacteria"/>
</dbReference>
<dbReference type="HOGENOM" id="CLU_087936_3_0_5"/>
<dbReference type="OrthoDB" id="5293449at2"/>
<dbReference type="Proteomes" id="UP000001054">
    <property type="component" value="Chromosome"/>
</dbReference>
<dbReference type="GO" id="GO:0005737">
    <property type="term" value="C:cytoplasm"/>
    <property type="evidence" value="ECO:0007669"/>
    <property type="project" value="UniProtKB-SubCell"/>
</dbReference>
<dbReference type="GO" id="GO:0009379">
    <property type="term" value="C:Holliday junction helicase complex"/>
    <property type="evidence" value="ECO:0007669"/>
    <property type="project" value="InterPro"/>
</dbReference>
<dbReference type="GO" id="GO:0048476">
    <property type="term" value="C:Holliday junction resolvase complex"/>
    <property type="evidence" value="ECO:0007669"/>
    <property type="project" value="UniProtKB-UniRule"/>
</dbReference>
<dbReference type="GO" id="GO:0005524">
    <property type="term" value="F:ATP binding"/>
    <property type="evidence" value="ECO:0007669"/>
    <property type="project" value="InterPro"/>
</dbReference>
<dbReference type="GO" id="GO:0000400">
    <property type="term" value="F:four-way junction DNA binding"/>
    <property type="evidence" value="ECO:0007669"/>
    <property type="project" value="UniProtKB-UniRule"/>
</dbReference>
<dbReference type="GO" id="GO:0009378">
    <property type="term" value="F:four-way junction helicase activity"/>
    <property type="evidence" value="ECO:0007669"/>
    <property type="project" value="InterPro"/>
</dbReference>
<dbReference type="GO" id="GO:0006310">
    <property type="term" value="P:DNA recombination"/>
    <property type="evidence" value="ECO:0007669"/>
    <property type="project" value="UniProtKB-UniRule"/>
</dbReference>
<dbReference type="GO" id="GO:0006281">
    <property type="term" value="P:DNA repair"/>
    <property type="evidence" value="ECO:0007669"/>
    <property type="project" value="UniProtKB-UniRule"/>
</dbReference>
<dbReference type="CDD" id="cd14332">
    <property type="entry name" value="UBA_RuvA_C"/>
    <property type="match status" value="1"/>
</dbReference>
<dbReference type="Gene3D" id="1.10.150.20">
    <property type="entry name" value="5' to 3' exonuclease, C-terminal subdomain"/>
    <property type="match status" value="1"/>
</dbReference>
<dbReference type="Gene3D" id="1.10.8.10">
    <property type="entry name" value="DNA helicase RuvA subunit, C-terminal domain"/>
    <property type="match status" value="1"/>
</dbReference>
<dbReference type="Gene3D" id="2.40.50.140">
    <property type="entry name" value="Nucleic acid-binding proteins"/>
    <property type="match status" value="1"/>
</dbReference>
<dbReference type="HAMAP" id="MF_00031">
    <property type="entry name" value="DNA_HJ_migration_RuvA"/>
    <property type="match status" value="1"/>
</dbReference>
<dbReference type="InterPro" id="IPR013849">
    <property type="entry name" value="DNA_helicase_Holl-junc_RuvA_I"/>
</dbReference>
<dbReference type="InterPro" id="IPR012340">
    <property type="entry name" value="NA-bd_OB-fold"/>
</dbReference>
<dbReference type="InterPro" id="IPR000085">
    <property type="entry name" value="RuvA"/>
</dbReference>
<dbReference type="InterPro" id="IPR010994">
    <property type="entry name" value="RuvA_2-like"/>
</dbReference>
<dbReference type="InterPro" id="IPR011114">
    <property type="entry name" value="RuvA_C"/>
</dbReference>
<dbReference type="InterPro" id="IPR036267">
    <property type="entry name" value="RuvA_C_sf"/>
</dbReference>
<dbReference type="NCBIfam" id="TIGR00084">
    <property type="entry name" value="ruvA"/>
    <property type="match status" value="1"/>
</dbReference>
<dbReference type="Pfam" id="PF14520">
    <property type="entry name" value="HHH_5"/>
    <property type="match status" value="1"/>
</dbReference>
<dbReference type="Pfam" id="PF07499">
    <property type="entry name" value="RuvA_C"/>
    <property type="match status" value="1"/>
</dbReference>
<dbReference type="Pfam" id="PF01330">
    <property type="entry name" value="RuvA_N"/>
    <property type="match status" value="1"/>
</dbReference>
<dbReference type="SUPFAM" id="SSF46929">
    <property type="entry name" value="DNA helicase RuvA subunit, C-terminal domain"/>
    <property type="match status" value="1"/>
</dbReference>
<dbReference type="SUPFAM" id="SSF50249">
    <property type="entry name" value="Nucleic acid-binding proteins"/>
    <property type="match status" value="1"/>
</dbReference>
<dbReference type="SUPFAM" id="SSF47781">
    <property type="entry name" value="RuvA domain 2-like"/>
    <property type="match status" value="1"/>
</dbReference>
<keyword id="KW-0963">Cytoplasm</keyword>
<keyword id="KW-0227">DNA damage</keyword>
<keyword id="KW-0233">DNA recombination</keyword>
<keyword id="KW-0234">DNA repair</keyword>
<keyword id="KW-0238">DNA-binding</keyword>
<keyword id="KW-1185">Reference proteome</keyword>